<reference evidence="7" key="1">
    <citation type="journal article" date="2008" name="BMC Genomics">
        <title>Highly plastic genome of Microcystis aeruginosa PCC 7806, a ubiquitous toxic freshwater cyanobacterium.</title>
        <authorList>
            <person name="Frangeul L."/>
            <person name="Quillardet P."/>
            <person name="Castets A.M."/>
            <person name="Humbert J.F."/>
            <person name="Matthijs H.C."/>
            <person name="Cortez D."/>
            <person name="Tolonen A."/>
            <person name="Zhang C.C."/>
            <person name="Gribaldo S."/>
            <person name="Kehr J.C."/>
            <person name="Zilliges Y."/>
            <person name="Ziemert N."/>
            <person name="Becker S."/>
            <person name="Talla E."/>
            <person name="Latifi A."/>
            <person name="Billault A."/>
            <person name="Lepelletier A."/>
            <person name="Dittmann E."/>
            <person name="Bouchier C."/>
            <person name="de Marsac N.T."/>
        </authorList>
    </citation>
    <scope>NUCLEOTIDE SEQUENCE [LARGE SCALE GENOMIC DNA]</scope>
    <source>
        <strain>PCC 7806</strain>
    </source>
</reference>
<reference evidence="8" key="2">
    <citation type="journal article" date="2014" name="Acta Crystallogr. D">
        <title>Structure of the gas vesicle protein GvpF from the cyanobacterium Microcystis aeruginosa.</title>
        <authorList>
            <person name="Xu B.Y."/>
            <person name="Dai Y.N."/>
            <person name="Zhou K."/>
            <person name="Liu Y.T."/>
            <person name="Sun Q."/>
            <person name="Ren Y.M."/>
            <person name="Chen Y."/>
            <person name="Zhou C.Z."/>
        </authorList>
    </citation>
    <scope>X-RAY CRYSTALLOGRAPHY (2.70 ANGSTROMS)</scope>
    <scope>SUBCELLULAR LOCATION</scope>
    <scope>DOMAIN</scope>
    <source>
        <strain evidence="7">PCC 7806</strain>
    </source>
</reference>
<proteinExistence type="evidence at protein level"/>
<dbReference type="EMBL" id="AM778860">
    <property type="protein sequence ID" value="CAO88759.1"/>
    <property type="molecule type" value="Genomic_DNA"/>
</dbReference>
<dbReference type="RefSeq" id="WP_002747917.1">
    <property type="nucleotide sequence ID" value="NZ_CP155078.1"/>
</dbReference>
<dbReference type="PDB" id="4QSG">
    <property type="method" value="X-ray"/>
    <property type="resolution" value="2.70 A"/>
    <property type="chains" value="A=1-244"/>
</dbReference>
<dbReference type="PDBsum" id="4QSG"/>
<dbReference type="SMR" id="A8Y9T3"/>
<dbReference type="EvolutionaryTrace" id="A8Y9T3"/>
<dbReference type="GO" id="GO:0031411">
    <property type="term" value="C:gas vesicle"/>
    <property type="evidence" value="ECO:0007669"/>
    <property type="project" value="UniProtKB-SubCell"/>
</dbReference>
<dbReference type="GO" id="GO:0031412">
    <property type="term" value="P:gas vesicle organization"/>
    <property type="evidence" value="ECO:0007669"/>
    <property type="project" value="InterPro"/>
</dbReference>
<dbReference type="InterPro" id="IPR009430">
    <property type="entry name" value="GvpL/GvpF"/>
</dbReference>
<dbReference type="PANTHER" id="PTHR36852">
    <property type="entry name" value="PROTEIN GVPL 2"/>
    <property type="match status" value="1"/>
</dbReference>
<dbReference type="PANTHER" id="PTHR36852:SF1">
    <property type="entry name" value="PROTEIN GVPL 2"/>
    <property type="match status" value="1"/>
</dbReference>
<dbReference type="Pfam" id="PF06386">
    <property type="entry name" value="GvpL_GvpF"/>
    <property type="match status" value="1"/>
</dbReference>
<sequence>MTVGLYLYGIFPEPIPDGLVLQGIDNEPVHSEMIDGFSFLYSAAHKEKYLASRRYLICHEKVLETVMEAGFTTLLPLRFGLVIKTWESVTEQLITPYKTQLKELFAKLSGQREVSIKIFWDNQWELQAALESNPKLKQERDAMMGKNLNMEEIIHIGQLIEATVLRRKQDIIQVFRDQLNHRAQEVIESDPMTDDMIYNAAYLIPWEQEPEFSQNVEAIDQQFGDRLRIRYNNLTAPYTFAQLI</sequence>
<organism>
    <name type="scientific">Microcystis aeruginosa (strain PCC 7806)</name>
    <dbReference type="NCBI Taxonomy" id="267872"/>
    <lineage>
        <taxon>Bacteria</taxon>
        <taxon>Bacillati</taxon>
        <taxon>Cyanobacteriota</taxon>
        <taxon>Cyanophyceae</taxon>
        <taxon>Oscillatoriophycideae</taxon>
        <taxon>Chroococcales</taxon>
        <taxon>Microcystaceae</taxon>
        <taxon>Microcystis</taxon>
    </lineage>
</organism>
<comment type="function">
    <text evidence="1 6">A minor component of the gas vesicle, may be involved in preventing GvpA aggregation during gas vesicle nucleation (By similarity). Gas vesicles (GV) are hollow, gas filled proteinaceous nanostructures. During planktonic growth they allow positioning of the organism at a favorable depth for light or nutrient acquisition (Probable).</text>
</comment>
<comment type="subunit">
    <text evidence="1">Binds GvpA.</text>
</comment>
<comment type="subcellular location">
    <subcellularLocation>
        <location evidence="2">Gas vesicle</location>
    </subcellularLocation>
    <text evidence="6">Probably faces the interior of the gas vesicle.</text>
</comment>
<comment type="domain">
    <text evidence="2">Has 2 domains with the C-terminal tail tucked between them. The C-terminus adopts a modified ferredoxin fold. GvpF from bacteria has an insertion compared to archaea (residues 122-160).</text>
</comment>
<comment type="miscellaneous">
    <text evidence="2">In this organism gas vesicles are about 120 nm wide and 500-1500 nm long, with regularly spaced ribs running nearly perpendicular to the long axis.</text>
</comment>
<comment type="similarity">
    <text evidence="5">Belongs to the gas vesicle GvpF/GvpL family.</text>
</comment>
<keyword id="KW-0002">3D-structure</keyword>
<keyword id="KW-0304">Gas vesicle</keyword>
<gene>
    <name evidence="3" type="primary">gvpF</name>
    <name evidence="7" type="ORF">IPF_5420</name>
</gene>
<feature type="chain" id="PRO_0000458453" description="Gas vesicle protein F">
    <location>
        <begin position="1"/>
        <end position="244"/>
    </location>
</feature>
<feature type="region of interest" description="N-terminus" evidence="2">
    <location>
        <begin position="1"/>
        <end position="109"/>
    </location>
</feature>
<feature type="region of interest" description="C-terminus, modifed ferredoxin fold" evidence="2">
    <location>
        <begin position="110"/>
        <end position="233"/>
    </location>
</feature>
<feature type="region of interest" description="C-tail" evidence="2">
    <location>
        <begin position="234"/>
        <end position="244"/>
    </location>
</feature>
<feature type="strand" evidence="9">
    <location>
        <begin position="5"/>
        <end position="13"/>
    </location>
</feature>
<feature type="helix" evidence="9">
    <location>
        <begin position="24"/>
        <end position="26"/>
    </location>
</feature>
<feature type="strand" evidence="9">
    <location>
        <begin position="28"/>
        <end position="34"/>
    </location>
</feature>
<feature type="strand" evidence="9">
    <location>
        <begin position="37"/>
        <end position="43"/>
    </location>
</feature>
<feature type="helix" evidence="9">
    <location>
        <begin position="53"/>
        <end position="68"/>
    </location>
</feature>
<feature type="strand" evidence="9">
    <location>
        <begin position="82"/>
        <end position="85"/>
    </location>
</feature>
<feature type="helix" evidence="9">
    <location>
        <begin position="86"/>
        <end position="88"/>
    </location>
</feature>
<feature type="helix" evidence="9">
    <location>
        <begin position="91"/>
        <end position="94"/>
    </location>
</feature>
<feature type="turn" evidence="9">
    <location>
        <begin position="95"/>
        <end position="97"/>
    </location>
</feature>
<feature type="helix" evidence="9">
    <location>
        <begin position="98"/>
        <end position="108"/>
    </location>
</feature>
<feature type="strand" evidence="9">
    <location>
        <begin position="111"/>
        <end position="120"/>
    </location>
</feature>
<feature type="helix" evidence="9">
    <location>
        <begin position="122"/>
        <end position="130"/>
    </location>
</feature>
<feature type="helix" evidence="9">
    <location>
        <begin position="134"/>
        <end position="141"/>
    </location>
</feature>
<feature type="turn" evidence="9">
    <location>
        <begin position="144"/>
        <end position="147"/>
    </location>
</feature>
<feature type="helix" evidence="9">
    <location>
        <begin position="150"/>
        <end position="179"/>
    </location>
</feature>
<feature type="helix" evidence="9">
    <location>
        <begin position="180"/>
        <end position="182"/>
    </location>
</feature>
<feature type="strand" evidence="9">
    <location>
        <begin position="184"/>
        <end position="188"/>
    </location>
</feature>
<feature type="strand" evidence="9">
    <location>
        <begin position="192"/>
        <end position="205"/>
    </location>
</feature>
<feature type="helix" evidence="9">
    <location>
        <begin position="206"/>
        <end position="208"/>
    </location>
</feature>
<feature type="helix" evidence="9">
    <location>
        <begin position="209"/>
        <end position="222"/>
    </location>
</feature>
<feature type="strand" evidence="9">
    <location>
        <begin position="227"/>
        <end position="232"/>
    </location>
</feature>
<feature type="turn" evidence="9">
    <location>
        <begin position="238"/>
        <end position="240"/>
    </location>
</feature>
<name>GVPF_MICA7</name>
<accession>A8Y9T3</accession>
<protein>
    <recommendedName>
        <fullName evidence="4">Gas vesicle protein F</fullName>
        <shortName evidence="4">GvpF</shortName>
    </recommendedName>
</protein>
<evidence type="ECO:0000250" key="1">
    <source>
        <dbReference type="UniProtKB" id="Q9HI21"/>
    </source>
</evidence>
<evidence type="ECO:0000269" key="2">
    <source>
    </source>
</evidence>
<evidence type="ECO:0000303" key="3">
    <source>
    </source>
</evidence>
<evidence type="ECO:0000303" key="4">
    <source>
    </source>
</evidence>
<evidence type="ECO:0000305" key="5"/>
<evidence type="ECO:0000305" key="6">
    <source>
    </source>
</evidence>
<evidence type="ECO:0000312" key="7">
    <source>
        <dbReference type="EMBL" id="CAO88759.1"/>
    </source>
</evidence>
<evidence type="ECO:0007744" key="8">
    <source>
        <dbReference type="PDB" id="4QSG"/>
    </source>
</evidence>
<evidence type="ECO:0007829" key="9">
    <source>
        <dbReference type="PDB" id="4QSG"/>
    </source>
</evidence>